<protein>
    <recommendedName>
        <fullName evidence="1">Shikimate dehydrogenase (NADP(+))</fullName>
        <shortName evidence="1">SDH</shortName>
        <ecNumber evidence="1">1.1.1.25</ecNumber>
    </recommendedName>
</protein>
<keyword id="KW-0028">Amino-acid biosynthesis</keyword>
<keyword id="KW-0057">Aromatic amino acid biosynthesis</keyword>
<keyword id="KW-0521">NADP</keyword>
<keyword id="KW-0560">Oxidoreductase</keyword>
<name>AROE_YERP3</name>
<dbReference type="EC" id="1.1.1.25" evidence="1"/>
<dbReference type="EMBL" id="CP000720">
    <property type="protein sequence ID" value="ABS47619.1"/>
    <property type="molecule type" value="Genomic_DNA"/>
</dbReference>
<dbReference type="RefSeq" id="WP_002209026.1">
    <property type="nucleotide sequence ID" value="NC_009708.1"/>
</dbReference>
<dbReference type="SMR" id="A7FNJ7"/>
<dbReference type="GeneID" id="57974357"/>
<dbReference type="KEGG" id="ypi:YpsIP31758_3877"/>
<dbReference type="HOGENOM" id="CLU_044063_2_1_6"/>
<dbReference type="UniPathway" id="UPA00053">
    <property type="reaction ID" value="UER00087"/>
</dbReference>
<dbReference type="Proteomes" id="UP000002412">
    <property type="component" value="Chromosome"/>
</dbReference>
<dbReference type="GO" id="GO:0005829">
    <property type="term" value="C:cytosol"/>
    <property type="evidence" value="ECO:0007669"/>
    <property type="project" value="TreeGrafter"/>
</dbReference>
<dbReference type="GO" id="GO:0050661">
    <property type="term" value="F:NADP binding"/>
    <property type="evidence" value="ECO:0007669"/>
    <property type="project" value="InterPro"/>
</dbReference>
<dbReference type="GO" id="GO:0004764">
    <property type="term" value="F:shikimate 3-dehydrogenase (NADP+) activity"/>
    <property type="evidence" value="ECO:0007669"/>
    <property type="project" value="UniProtKB-UniRule"/>
</dbReference>
<dbReference type="GO" id="GO:0008652">
    <property type="term" value="P:amino acid biosynthetic process"/>
    <property type="evidence" value="ECO:0007669"/>
    <property type="project" value="UniProtKB-KW"/>
</dbReference>
<dbReference type="GO" id="GO:0009073">
    <property type="term" value="P:aromatic amino acid family biosynthetic process"/>
    <property type="evidence" value="ECO:0007669"/>
    <property type="project" value="UniProtKB-KW"/>
</dbReference>
<dbReference type="GO" id="GO:0009423">
    <property type="term" value="P:chorismate biosynthetic process"/>
    <property type="evidence" value="ECO:0007669"/>
    <property type="project" value="UniProtKB-UniRule"/>
</dbReference>
<dbReference type="GO" id="GO:0019632">
    <property type="term" value="P:shikimate metabolic process"/>
    <property type="evidence" value="ECO:0007669"/>
    <property type="project" value="InterPro"/>
</dbReference>
<dbReference type="CDD" id="cd01065">
    <property type="entry name" value="NAD_bind_Shikimate_DH"/>
    <property type="match status" value="1"/>
</dbReference>
<dbReference type="FunFam" id="3.40.50.10860:FF:000006">
    <property type="entry name" value="Shikimate dehydrogenase (NADP(+))"/>
    <property type="match status" value="1"/>
</dbReference>
<dbReference type="FunFam" id="3.40.50.720:FF:000104">
    <property type="entry name" value="Shikimate dehydrogenase (NADP(+))"/>
    <property type="match status" value="1"/>
</dbReference>
<dbReference type="Gene3D" id="3.40.50.10860">
    <property type="entry name" value="Leucine Dehydrogenase, chain A, domain 1"/>
    <property type="match status" value="1"/>
</dbReference>
<dbReference type="Gene3D" id="3.40.50.720">
    <property type="entry name" value="NAD(P)-binding Rossmann-like Domain"/>
    <property type="match status" value="1"/>
</dbReference>
<dbReference type="HAMAP" id="MF_00222">
    <property type="entry name" value="Shikimate_DH_AroE"/>
    <property type="match status" value="1"/>
</dbReference>
<dbReference type="InterPro" id="IPR046346">
    <property type="entry name" value="Aminoacid_DH-like_N_sf"/>
</dbReference>
<dbReference type="InterPro" id="IPR036291">
    <property type="entry name" value="NAD(P)-bd_dom_sf"/>
</dbReference>
<dbReference type="InterPro" id="IPR041121">
    <property type="entry name" value="SDH_C"/>
</dbReference>
<dbReference type="InterPro" id="IPR011342">
    <property type="entry name" value="Shikimate_DH"/>
</dbReference>
<dbReference type="InterPro" id="IPR013708">
    <property type="entry name" value="Shikimate_DH-bd_N"/>
</dbReference>
<dbReference type="InterPro" id="IPR022893">
    <property type="entry name" value="Shikimate_DH_fam"/>
</dbReference>
<dbReference type="InterPro" id="IPR006151">
    <property type="entry name" value="Shikm_DH/Glu-tRNA_Rdtase"/>
</dbReference>
<dbReference type="NCBIfam" id="TIGR00507">
    <property type="entry name" value="aroE"/>
    <property type="match status" value="1"/>
</dbReference>
<dbReference type="NCBIfam" id="NF001310">
    <property type="entry name" value="PRK00258.1-2"/>
    <property type="match status" value="1"/>
</dbReference>
<dbReference type="PANTHER" id="PTHR21089:SF1">
    <property type="entry name" value="BIFUNCTIONAL 3-DEHYDROQUINATE DEHYDRATASE_SHIKIMATE DEHYDROGENASE, CHLOROPLASTIC"/>
    <property type="match status" value="1"/>
</dbReference>
<dbReference type="PANTHER" id="PTHR21089">
    <property type="entry name" value="SHIKIMATE DEHYDROGENASE"/>
    <property type="match status" value="1"/>
</dbReference>
<dbReference type="Pfam" id="PF18317">
    <property type="entry name" value="SDH_C"/>
    <property type="match status" value="1"/>
</dbReference>
<dbReference type="Pfam" id="PF01488">
    <property type="entry name" value="Shikimate_DH"/>
    <property type="match status" value="1"/>
</dbReference>
<dbReference type="Pfam" id="PF08501">
    <property type="entry name" value="Shikimate_dh_N"/>
    <property type="match status" value="1"/>
</dbReference>
<dbReference type="SUPFAM" id="SSF53223">
    <property type="entry name" value="Aminoacid dehydrogenase-like, N-terminal domain"/>
    <property type="match status" value="1"/>
</dbReference>
<dbReference type="SUPFAM" id="SSF51735">
    <property type="entry name" value="NAD(P)-binding Rossmann-fold domains"/>
    <property type="match status" value="1"/>
</dbReference>
<feature type="chain" id="PRO_1000058668" description="Shikimate dehydrogenase (NADP(+))">
    <location>
        <begin position="1"/>
        <end position="273"/>
    </location>
</feature>
<feature type="active site" description="Proton acceptor" evidence="1">
    <location>
        <position position="66"/>
    </location>
</feature>
<feature type="binding site" evidence="1">
    <location>
        <begin position="15"/>
        <end position="17"/>
    </location>
    <ligand>
        <name>shikimate</name>
        <dbReference type="ChEBI" id="CHEBI:36208"/>
    </ligand>
</feature>
<feature type="binding site" evidence="1">
    <location>
        <position position="62"/>
    </location>
    <ligand>
        <name>shikimate</name>
        <dbReference type="ChEBI" id="CHEBI:36208"/>
    </ligand>
</feature>
<feature type="binding site" evidence="1">
    <location>
        <position position="78"/>
    </location>
    <ligand>
        <name>NADP(+)</name>
        <dbReference type="ChEBI" id="CHEBI:58349"/>
    </ligand>
</feature>
<feature type="binding site" evidence="1">
    <location>
        <position position="87"/>
    </location>
    <ligand>
        <name>shikimate</name>
        <dbReference type="ChEBI" id="CHEBI:36208"/>
    </ligand>
</feature>
<feature type="binding site" evidence="1">
    <location>
        <position position="103"/>
    </location>
    <ligand>
        <name>shikimate</name>
        <dbReference type="ChEBI" id="CHEBI:36208"/>
    </ligand>
</feature>
<feature type="binding site" evidence="1">
    <location>
        <begin position="127"/>
        <end position="131"/>
    </location>
    <ligand>
        <name>NADP(+)</name>
        <dbReference type="ChEBI" id="CHEBI:58349"/>
    </ligand>
</feature>
<feature type="binding site" evidence="1">
    <location>
        <begin position="150"/>
        <end position="155"/>
    </location>
    <ligand>
        <name>NADP(+)</name>
        <dbReference type="ChEBI" id="CHEBI:58349"/>
    </ligand>
</feature>
<feature type="binding site" evidence="1">
    <location>
        <position position="218"/>
    </location>
    <ligand>
        <name>NADP(+)</name>
        <dbReference type="ChEBI" id="CHEBI:58349"/>
    </ligand>
</feature>
<feature type="binding site" evidence="1">
    <location>
        <position position="238"/>
    </location>
    <ligand>
        <name>NADP(+)</name>
        <dbReference type="ChEBI" id="CHEBI:58349"/>
    </ligand>
</feature>
<reference key="1">
    <citation type="journal article" date="2007" name="PLoS Genet.">
        <title>The complete genome sequence of Yersinia pseudotuberculosis IP31758, the causative agent of Far East scarlet-like fever.</title>
        <authorList>
            <person name="Eppinger M."/>
            <person name="Rosovitz M.J."/>
            <person name="Fricke W.F."/>
            <person name="Rasko D.A."/>
            <person name="Kokorina G."/>
            <person name="Fayolle C."/>
            <person name="Lindler L.E."/>
            <person name="Carniel E."/>
            <person name="Ravel J."/>
        </authorList>
    </citation>
    <scope>NUCLEOTIDE SEQUENCE [LARGE SCALE GENOMIC DNA]</scope>
    <source>
        <strain>IP 31758</strain>
    </source>
</reference>
<evidence type="ECO:0000255" key="1">
    <source>
        <dbReference type="HAMAP-Rule" id="MF_00222"/>
    </source>
</evidence>
<proteinExistence type="inferred from homology"/>
<sequence>MDQKFAVFGNPISHSKSPRIHTLFSEQTGIEHRYGKVLAPSEAFENTLVSFFADGAQGANITTPFKERAYDQCDELTDRASLAGAVNTIKRLEDGRLLGDNTDGIGLLSDLERQNLIRTTDHILLVGAGGAARGVILPLLSYGCTVVVTNRTHTRAQQLAKVFNHIGDIDVCEMSELAGQRFDLVINATASGLHGEVPNLPAAILTSQTRCYDMFYQAGTTPFLAWAQRLGLADYADGLGMLVGQAAHAFKLWHGVMPEITPVLAQLRSELGK</sequence>
<accession>A7FNJ7</accession>
<organism>
    <name type="scientific">Yersinia pseudotuberculosis serotype O:1b (strain IP 31758)</name>
    <dbReference type="NCBI Taxonomy" id="349747"/>
    <lineage>
        <taxon>Bacteria</taxon>
        <taxon>Pseudomonadati</taxon>
        <taxon>Pseudomonadota</taxon>
        <taxon>Gammaproteobacteria</taxon>
        <taxon>Enterobacterales</taxon>
        <taxon>Yersiniaceae</taxon>
        <taxon>Yersinia</taxon>
    </lineage>
</organism>
<gene>
    <name evidence="1" type="primary">aroE</name>
    <name type="ordered locus">YpsIP31758_3877</name>
</gene>
<comment type="function">
    <text evidence="1">Involved in the biosynthesis of the chorismate, which leads to the biosynthesis of aromatic amino acids. Catalyzes the reversible NADPH linked reduction of 3-dehydroshikimate (DHSA) to yield shikimate (SA).</text>
</comment>
<comment type="catalytic activity">
    <reaction evidence="1">
        <text>shikimate + NADP(+) = 3-dehydroshikimate + NADPH + H(+)</text>
        <dbReference type="Rhea" id="RHEA:17737"/>
        <dbReference type="ChEBI" id="CHEBI:15378"/>
        <dbReference type="ChEBI" id="CHEBI:16630"/>
        <dbReference type="ChEBI" id="CHEBI:36208"/>
        <dbReference type="ChEBI" id="CHEBI:57783"/>
        <dbReference type="ChEBI" id="CHEBI:58349"/>
        <dbReference type="EC" id="1.1.1.25"/>
    </reaction>
</comment>
<comment type="pathway">
    <text evidence="1">Metabolic intermediate biosynthesis; chorismate biosynthesis; chorismate from D-erythrose 4-phosphate and phosphoenolpyruvate: step 4/7.</text>
</comment>
<comment type="subunit">
    <text evidence="1">Homodimer.</text>
</comment>
<comment type="similarity">
    <text evidence="1">Belongs to the shikimate dehydrogenase family.</text>
</comment>